<proteinExistence type="evidence at transcript level"/>
<evidence type="ECO:0000250" key="1">
    <source>
        <dbReference type="UniProtKB" id="Q92560"/>
    </source>
</evidence>
<evidence type="ECO:0000255" key="2">
    <source>
        <dbReference type="PROSITE-ProRule" id="PRU01393"/>
    </source>
</evidence>
<evidence type="ECO:0000255" key="3">
    <source>
        <dbReference type="PROSITE-ProRule" id="PRU01394"/>
    </source>
</evidence>
<evidence type="ECO:0000256" key="4">
    <source>
        <dbReference type="SAM" id="MobiDB-lite"/>
    </source>
</evidence>
<evidence type="ECO:0000305" key="5"/>
<gene>
    <name type="primary">bap1</name>
</gene>
<keyword id="KW-0156">Chromatin regulator</keyword>
<keyword id="KW-0963">Cytoplasm</keyword>
<keyword id="KW-0378">Hydrolase</keyword>
<keyword id="KW-0539">Nucleus</keyword>
<keyword id="KW-0645">Protease</keyword>
<keyword id="KW-1185">Reference proteome</keyword>
<keyword id="KW-0788">Thiol protease</keyword>
<keyword id="KW-0833">Ubl conjugation pathway</keyword>
<sequence>MNKGWLELESDPGLFTLLVEDFGVKGVQVEEIYDLQSKCPGPVYGFIFLFKWIEERRSRRKVSTLLDDTSVMEDEVVNNMFFAHQLIPNSCATHALLSVLLNCGGVHLGPTLSRIKEFTKGFSPESKGYAIGNAPELAKAHNSHARPEPRHLPEKQNGISAVRTMEAFHFVSYVPIKGRLFELDGLKVYPIDHGPWAEDEEWTDKARRVIMERIGLATAGEPYHDIRFNLMAVVPDRRLKYEGKLNILKMNRQTVLEALQQLIRVTQPELIQAQKSTDGQSTEETKSPAIKAPVSQESHRAHHGSHRSTTDLGAEPAGSLLRGPVLSAHNKSKPLPQNGGIVPAPASRLPAFLDNHNYAKSPMQEEEDLAAGVGRSRGVPPPAPDTDEEEEEETENVRRPLTPPGFKRRSSESLPPPPGPEPGVLAEKLKETQRDLCSPLSIKTGAPTAPHSQPSPTPSNESTDTASEIGSAFNSPLRSPLRSANPTRPSSPVTSHLSKVLFGEEEPLSRLDCVRYNRAVRELGPHISTGILHLSKDGYLSPLSRLDTGKVSPKSHKAEEPRESPEPDSERNRVTEAPQGEKFSPKELLALLKCVEAEISASEACLREELEKRKKFKIDDQRRTHNYDEFICAFISMLAQEGMLASLVEQNISVRRRQGVSIGRLHKQRKPDRRKRSRPYKAKRQ</sequence>
<reference key="1">
    <citation type="journal article" date="2016" name="Nature">
        <title>Genome evolution in the allotetraploid frog Xenopus laevis.</title>
        <authorList>
            <person name="Session A.M."/>
            <person name="Uno Y."/>
            <person name="Kwon T."/>
            <person name="Chapman J.A."/>
            <person name="Toyoda A."/>
            <person name="Takahashi S."/>
            <person name="Fukui A."/>
            <person name="Hikosaka A."/>
            <person name="Suzuki A."/>
            <person name="Kondo M."/>
            <person name="van Heeringen S.J."/>
            <person name="Quigley I."/>
            <person name="Heinz S."/>
            <person name="Ogino H."/>
            <person name="Ochi H."/>
            <person name="Hellsten U."/>
            <person name="Lyons J.B."/>
            <person name="Simakov O."/>
            <person name="Putnam N."/>
            <person name="Stites J."/>
            <person name="Kuroki Y."/>
            <person name="Tanaka T."/>
            <person name="Michiue T."/>
            <person name="Watanabe M."/>
            <person name="Bogdanovic O."/>
            <person name="Lister R."/>
            <person name="Georgiou G."/>
            <person name="Paranjpe S.S."/>
            <person name="van Kruijsbergen I."/>
            <person name="Shu S."/>
            <person name="Carlson J."/>
            <person name="Kinoshita T."/>
            <person name="Ohta Y."/>
            <person name="Mawaribuchi S."/>
            <person name="Jenkins J."/>
            <person name="Grimwood J."/>
            <person name="Schmutz J."/>
            <person name="Mitros T."/>
            <person name="Mozaffari S.V."/>
            <person name="Suzuki Y."/>
            <person name="Haramoto Y."/>
            <person name="Yamamoto T.S."/>
            <person name="Takagi C."/>
            <person name="Heald R."/>
            <person name="Miller K."/>
            <person name="Haudenschild C."/>
            <person name="Kitzman J."/>
            <person name="Nakayama T."/>
            <person name="Izutsu Y."/>
            <person name="Robert J."/>
            <person name="Fortriede J."/>
            <person name="Burns K."/>
            <person name="Lotay V."/>
            <person name="Karimi K."/>
            <person name="Yasuoka Y."/>
            <person name="Dichmann D.S."/>
            <person name="Flajnik M.F."/>
            <person name="Houston D.W."/>
            <person name="Shendure J."/>
            <person name="DuPasquier L."/>
            <person name="Vize P.D."/>
            <person name="Zorn A.M."/>
            <person name="Ito M."/>
            <person name="Marcotte E.M."/>
            <person name="Wallingford J.B."/>
            <person name="Ito Y."/>
            <person name="Asashima M."/>
            <person name="Ueno N."/>
            <person name="Matsuda Y."/>
            <person name="Veenstra G.J."/>
            <person name="Fujiyama A."/>
            <person name="Harland R.M."/>
            <person name="Taira M."/>
            <person name="Rokhsar D.S."/>
        </authorList>
    </citation>
    <scope>NUCLEOTIDE SEQUENCE [LARGE SCALE GENOMIC DNA]</scope>
    <source>
        <strain>J</strain>
    </source>
</reference>
<reference key="2">
    <citation type="submission" date="2005-04" db="EMBL/GenBank/DDBJ databases">
        <authorList>
            <consortium name="NIH - Xenopus Gene Collection (XGC) project"/>
        </authorList>
    </citation>
    <scope>NUCLEOTIDE SEQUENCE [LARGE SCALE MRNA]</scope>
    <source>
        <tissue>Embryo</tissue>
    </source>
</reference>
<name>BAP1_XENLA</name>
<comment type="function">
    <text evidence="1">Deubiquitinating enzyme that plays a key role in chromatin by mediating deubiquitination of histone H2A. Catalytic component of the PR-DUB complex, a complex that specifically mediates deubiquitination of histone H2A monoubiquitinated at 'Lys-119' (H2AK119ub1) (By similarity).</text>
</comment>
<comment type="catalytic activity">
    <reaction evidence="1">
        <text>Thiol-dependent hydrolysis of ester, thioester, amide, peptide and isopeptide bonds formed by the C-terminal Gly of ubiquitin (a 76-residue protein attached to proteins as an intracellular targeting signal).</text>
        <dbReference type="EC" id="3.4.19.12"/>
    </reaction>
</comment>
<comment type="subunit">
    <text evidence="1">Component of the PR-DUB complex.</text>
</comment>
<comment type="subcellular location">
    <subcellularLocation>
        <location evidence="1">Cytoplasm</location>
    </subcellularLocation>
    <subcellularLocation>
        <location evidence="1">Nucleus</location>
    </subcellularLocation>
    <text evidence="1">Mainly nuclear. Binds to chromatin.</text>
</comment>
<comment type="similarity">
    <text evidence="5">Belongs to the peptidase C12 family. BAP1 subfamily.</text>
</comment>
<comment type="sequence caution" evidence="5">
    <conflict type="frameshift">
        <sequence resource="EMBL-CDS" id="AAH94108"/>
    </conflict>
</comment>
<dbReference type="EC" id="3.4.19.12" evidence="1"/>
<dbReference type="EMBL" id="CM004472">
    <property type="protein sequence ID" value="OCT85695.1"/>
    <property type="molecule type" value="Genomic_DNA"/>
</dbReference>
<dbReference type="EMBL" id="BC094108">
    <property type="protein sequence ID" value="AAH94108.1"/>
    <property type="status" value="ALT_FRAME"/>
    <property type="molecule type" value="mRNA"/>
</dbReference>
<dbReference type="RefSeq" id="NP_001089388.1">
    <property type="nucleotide sequence ID" value="NM_001095919.1"/>
</dbReference>
<dbReference type="DNASU" id="734438"/>
<dbReference type="GeneID" id="734438"/>
<dbReference type="KEGG" id="xla:734438"/>
<dbReference type="AGR" id="Xenbase:XB-GENE-866405"/>
<dbReference type="CTD" id="734438"/>
<dbReference type="Xenbase" id="XB-GENE-866405">
    <property type="gene designation" value="bap1.L"/>
</dbReference>
<dbReference type="OrthoDB" id="1924260at2759"/>
<dbReference type="Proteomes" id="UP000186698">
    <property type="component" value="Chromosome 4L"/>
</dbReference>
<dbReference type="Proteomes" id="UP000694892">
    <property type="component" value="Chromosome 4L"/>
</dbReference>
<dbReference type="Bgee" id="734438">
    <property type="expression patterns" value="Expressed in egg cell and 19 other cell types or tissues"/>
</dbReference>
<dbReference type="GO" id="GO:0005737">
    <property type="term" value="C:cytoplasm"/>
    <property type="evidence" value="ECO:0000250"/>
    <property type="project" value="UniProtKB"/>
</dbReference>
<dbReference type="GO" id="GO:0005634">
    <property type="term" value="C:nucleus"/>
    <property type="evidence" value="ECO:0000250"/>
    <property type="project" value="UniProtKB"/>
</dbReference>
<dbReference type="GO" id="GO:0035517">
    <property type="term" value="C:PR-DUB complex"/>
    <property type="evidence" value="ECO:0000250"/>
    <property type="project" value="UniProtKB"/>
</dbReference>
<dbReference type="GO" id="GO:0003682">
    <property type="term" value="F:chromatin binding"/>
    <property type="evidence" value="ECO:0000250"/>
    <property type="project" value="UniProtKB"/>
</dbReference>
<dbReference type="GO" id="GO:0004843">
    <property type="term" value="F:cysteine-type deubiquitinase activity"/>
    <property type="evidence" value="ECO:0000250"/>
    <property type="project" value="UniProtKB"/>
</dbReference>
<dbReference type="GO" id="GO:0031507">
    <property type="term" value="P:heterochromatin formation"/>
    <property type="evidence" value="ECO:0000318"/>
    <property type="project" value="GO_Central"/>
</dbReference>
<dbReference type="GO" id="GO:0045892">
    <property type="term" value="P:negative regulation of DNA-templated transcription"/>
    <property type="evidence" value="ECO:0000250"/>
    <property type="project" value="UniProtKB"/>
</dbReference>
<dbReference type="GO" id="GO:0016579">
    <property type="term" value="P:protein deubiquitination"/>
    <property type="evidence" value="ECO:0000250"/>
    <property type="project" value="UniProtKB"/>
</dbReference>
<dbReference type="GO" id="GO:0071108">
    <property type="term" value="P:protein K48-linked deubiquitination"/>
    <property type="evidence" value="ECO:0000250"/>
    <property type="project" value="UniProtKB"/>
</dbReference>
<dbReference type="GO" id="GO:0051726">
    <property type="term" value="P:regulation of cell cycle"/>
    <property type="evidence" value="ECO:0000250"/>
    <property type="project" value="UniProtKB"/>
</dbReference>
<dbReference type="GO" id="GO:0001558">
    <property type="term" value="P:regulation of cell growth"/>
    <property type="evidence" value="ECO:0000250"/>
    <property type="project" value="UniProtKB"/>
</dbReference>
<dbReference type="GO" id="GO:0006511">
    <property type="term" value="P:ubiquitin-dependent protein catabolic process"/>
    <property type="evidence" value="ECO:0007669"/>
    <property type="project" value="InterPro"/>
</dbReference>
<dbReference type="CDD" id="cd09617">
    <property type="entry name" value="Peptidase_C12_UCH37_BAP1"/>
    <property type="match status" value="1"/>
</dbReference>
<dbReference type="FunFam" id="3.40.532.10:FF:000002">
    <property type="entry name" value="Ubiquitin carboxyl-terminal hydrolase"/>
    <property type="match status" value="1"/>
</dbReference>
<dbReference type="FunFam" id="1.20.58.860:FF:000010">
    <property type="entry name" value="Ubiquitin carboxyl-terminal hydrolase BAP1"/>
    <property type="match status" value="1"/>
</dbReference>
<dbReference type="Gene3D" id="1.20.58.860">
    <property type="match status" value="1"/>
</dbReference>
<dbReference type="Gene3D" id="3.40.532.10">
    <property type="entry name" value="Peptidase C12, ubiquitin carboxyl-terminal hydrolase"/>
    <property type="match status" value="1"/>
</dbReference>
<dbReference type="InterPro" id="IPR038765">
    <property type="entry name" value="Papain-like_cys_pep_sf"/>
</dbReference>
<dbReference type="InterPro" id="IPR001578">
    <property type="entry name" value="Peptidase_C12_UCH"/>
</dbReference>
<dbReference type="InterPro" id="IPR036959">
    <property type="entry name" value="Peptidase_C12_UCH_sf"/>
</dbReference>
<dbReference type="InterPro" id="IPR041507">
    <property type="entry name" value="UCH_C"/>
</dbReference>
<dbReference type="PANTHER" id="PTHR10589">
    <property type="entry name" value="UBIQUITIN CARBOXYL-TERMINAL HYDROLASE"/>
    <property type="match status" value="1"/>
</dbReference>
<dbReference type="PANTHER" id="PTHR10589:SF28">
    <property type="entry name" value="UBIQUITIN CARBOXYL-TERMINAL HYDROLASE BAP1"/>
    <property type="match status" value="1"/>
</dbReference>
<dbReference type="Pfam" id="PF01088">
    <property type="entry name" value="Peptidase_C12"/>
    <property type="match status" value="1"/>
</dbReference>
<dbReference type="Pfam" id="PF18031">
    <property type="entry name" value="UCH_C"/>
    <property type="match status" value="1"/>
</dbReference>
<dbReference type="PRINTS" id="PR00707">
    <property type="entry name" value="UBCTHYDRLASE"/>
</dbReference>
<dbReference type="SUPFAM" id="SSF54001">
    <property type="entry name" value="Cysteine proteinases"/>
    <property type="match status" value="1"/>
</dbReference>
<dbReference type="PROSITE" id="PS52048">
    <property type="entry name" value="UCH_DOMAIN"/>
    <property type="match status" value="1"/>
</dbReference>
<dbReference type="PROSITE" id="PS52049">
    <property type="entry name" value="ULD"/>
    <property type="match status" value="1"/>
</dbReference>
<accession>Q52L14</accession>
<accession>A0A974D7T4</accession>
<organism>
    <name type="scientific">Xenopus laevis</name>
    <name type="common">African clawed frog</name>
    <dbReference type="NCBI Taxonomy" id="8355"/>
    <lineage>
        <taxon>Eukaryota</taxon>
        <taxon>Metazoa</taxon>
        <taxon>Chordata</taxon>
        <taxon>Craniata</taxon>
        <taxon>Vertebrata</taxon>
        <taxon>Euteleostomi</taxon>
        <taxon>Amphibia</taxon>
        <taxon>Batrachia</taxon>
        <taxon>Anura</taxon>
        <taxon>Pipoidea</taxon>
        <taxon>Pipidae</taxon>
        <taxon>Xenopodinae</taxon>
        <taxon>Xenopus</taxon>
        <taxon>Xenopus</taxon>
    </lineage>
</organism>
<protein>
    <recommendedName>
        <fullName>Ubiquitin carboxyl-terminal hydrolase BAP1</fullName>
        <ecNumber evidence="1">3.4.19.12</ecNumber>
    </recommendedName>
    <alternativeName>
        <fullName>BRCA1-associated protein 1</fullName>
    </alternativeName>
</protein>
<feature type="chain" id="PRO_0000395820" description="Ubiquitin carboxyl-terminal hydrolase BAP1">
    <location>
        <begin position="1"/>
        <end position="685"/>
    </location>
</feature>
<feature type="domain" description="UCH catalytic" evidence="2">
    <location>
        <begin position="4"/>
        <end position="235"/>
    </location>
</feature>
<feature type="domain" description="ULD" evidence="3">
    <location>
        <begin position="626"/>
        <end position="654"/>
    </location>
</feature>
<feature type="region of interest" description="Disordered" evidence="4">
    <location>
        <begin position="272"/>
        <end position="347"/>
    </location>
</feature>
<feature type="region of interest" description="Disordered" evidence="4">
    <location>
        <begin position="363"/>
        <end position="425"/>
    </location>
</feature>
<feature type="region of interest" description="Disordered" evidence="4">
    <location>
        <begin position="440"/>
        <end position="496"/>
    </location>
</feature>
<feature type="region of interest" description="Disordered" evidence="4">
    <location>
        <begin position="543"/>
        <end position="580"/>
    </location>
</feature>
<feature type="region of interest" description="Disordered" evidence="4">
    <location>
        <begin position="659"/>
        <end position="685"/>
    </location>
</feature>
<feature type="compositionally biased region" description="Polar residues" evidence="4">
    <location>
        <begin position="273"/>
        <end position="282"/>
    </location>
</feature>
<feature type="compositionally biased region" description="Acidic residues" evidence="4">
    <location>
        <begin position="385"/>
        <end position="394"/>
    </location>
</feature>
<feature type="compositionally biased region" description="Polar residues" evidence="4">
    <location>
        <begin position="450"/>
        <end position="496"/>
    </location>
</feature>
<feature type="compositionally biased region" description="Basic and acidic residues" evidence="4">
    <location>
        <begin position="556"/>
        <end position="574"/>
    </location>
</feature>
<feature type="active site" description="Nucleophile" evidence="2">
    <location>
        <position position="91"/>
    </location>
</feature>
<feature type="active site" description="Proton donor" evidence="2">
    <location>
        <position position="169"/>
    </location>
</feature>
<feature type="site" description="Transition state stabilizer" evidence="2">
    <location>
        <position position="85"/>
    </location>
</feature>
<feature type="site" description="Important for enzyme activity" evidence="2">
    <location>
        <position position="184"/>
    </location>
</feature>